<organism>
    <name type="scientific">Xenopus tropicalis</name>
    <name type="common">Western clawed frog</name>
    <name type="synonym">Silurana tropicalis</name>
    <dbReference type="NCBI Taxonomy" id="8364"/>
    <lineage>
        <taxon>Eukaryota</taxon>
        <taxon>Metazoa</taxon>
        <taxon>Chordata</taxon>
        <taxon>Craniata</taxon>
        <taxon>Vertebrata</taxon>
        <taxon>Euteleostomi</taxon>
        <taxon>Amphibia</taxon>
        <taxon>Batrachia</taxon>
        <taxon>Anura</taxon>
        <taxon>Pipoidea</taxon>
        <taxon>Pipidae</taxon>
        <taxon>Xenopodinae</taxon>
        <taxon>Xenopus</taxon>
        <taxon>Silurana</taxon>
    </lineage>
</organism>
<comment type="similarity">
    <text evidence="2">Belongs to the purine/pyrimidine phosphoribosyltransferase family.</text>
</comment>
<comment type="caution">
    <text evidence="2">Lacks the conserved active site Asp and is not expected to have phosphoribosyltransferase activity.</text>
</comment>
<gene>
    <name type="primary">prtfdc1</name>
</gene>
<reference key="1">
    <citation type="submission" date="2007-03" db="EMBL/GenBank/DDBJ databases">
        <authorList>
            <consortium name="NIH - Xenopus Gene Collection (XGC) project"/>
        </authorList>
    </citation>
    <scope>NUCLEOTIDE SEQUENCE [LARGE SCALE MRNA]</scope>
    <source>
        <tissue>Embryo</tissue>
    </source>
</reference>
<accession>A4II60</accession>
<evidence type="ECO:0000250" key="1"/>
<evidence type="ECO:0000305" key="2"/>
<protein>
    <recommendedName>
        <fullName>Phosphoribosyltransferase domain-containing protein 1</fullName>
    </recommendedName>
</protein>
<name>PRDC1_XENTR</name>
<feature type="chain" id="PRO_0000318178" description="Phosphoribosyltransferase domain-containing protein 1">
    <location>
        <begin position="1"/>
        <end position="224"/>
    </location>
</feature>
<feature type="binding site" evidence="1">
    <location>
        <begin position="140"/>
        <end position="148"/>
    </location>
    <ligand>
        <name>GMP</name>
        <dbReference type="ChEBI" id="CHEBI:58115"/>
    </ligand>
</feature>
<feature type="binding site" evidence="1">
    <location>
        <position position="140"/>
    </location>
    <ligand>
        <name>Mg(2+)</name>
        <dbReference type="ChEBI" id="CHEBI:18420"/>
    </ligand>
</feature>
<feature type="binding site" evidence="1">
    <location>
        <position position="141"/>
    </location>
    <ligand>
        <name>Mg(2+)</name>
        <dbReference type="ChEBI" id="CHEBI:18420"/>
    </ligand>
</feature>
<feature type="binding site" evidence="1">
    <location>
        <position position="172"/>
    </location>
    <ligand>
        <name>GMP</name>
        <dbReference type="ChEBI" id="CHEBI:58115"/>
    </ligand>
</feature>
<feature type="binding site" evidence="1">
    <location>
        <begin position="193"/>
        <end position="194"/>
    </location>
    <ligand>
        <name>GMP</name>
        <dbReference type="ChEBI" id="CHEBI:58115"/>
    </ligand>
</feature>
<feature type="binding site" evidence="1">
    <location>
        <position position="200"/>
    </location>
    <ligand>
        <name>GMP</name>
        <dbReference type="ChEBI" id="CHEBI:58115"/>
    </ligand>
</feature>
<feature type="binding site" evidence="1">
    <location>
        <position position="200"/>
    </location>
    <ligand>
        <name>Mg(2+)</name>
        <dbReference type="ChEBI" id="CHEBI:18420"/>
    </ligand>
</feature>
<dbReference type="EMBL" id="BC135868">
    <property type="protein sequence ID" value="AAI35869.1"/>
    <property type="molecule type" value="mRNA"/>
</dbReference>
<dbReference type="RefSeq" id="NP_001096362.1">
    <property type="nucleotide sequence ID" value="NM_001102892.1"/>
</dbReference>
<dbReference type="RefSeq" id="XP_017950000.1">
    <property type="nucleotide sequence ID" value="XM_018094511.2"/>
</dbReference>
<dbReference type="SMR" id="A4II60"/>
<dbReference type="FunCoup" id="A4II60">
    <property type="interactions" value="436"/>
</dbReference>
<dbReference type="STRING" id="8364.ENSXETP00000049185"/>
<dbReference type="PaxDb" id="8364-ENSXETP00000063886"/>
<dbReference type="GeneID" id="100124954"/>
<dbReference type="KEGG" id="xtr:100124954"/>
<dbReference type="AGR" id="Xenbase:XB-GENE-942165"/>
<dbReference type="CTD" id="56952"/>
<dbReference type="Xenbase" id="XB-GENE-942165">
    <property type="gene designation" value="prtfdc1"/>
</dbReference>
<dbReference type="eggNOG" id="KOG3367">
    <property type="taxonomic scope" value="Eukaryota"/>
</dbReference>
<dbReference type="HOGENOM" id="CLU_073615_3_0_1"/>
<dbReference type="InParanoid" id="A4II60"/>
<dbReference type="OMA" id="VIFMEDI"/>
<dbReference type="OrthoDB" id="9449045at2759"/>
<dbReference type="Proteomes" id="UP000008143">
    <property type="component" value="Chromosome 6"/>
</dbReference>
<dbReference type="Bgee" id="ENSXETG00000005902">
    <property type="expression patterns" value="Expressed in testis and 13 other cell types or tissues"/>
</dbReference>
<dbReference type="ExpressionAtlas" id="A4II60">
    <property type="expression patterns" value="baseline"/>
</dbReference>
<dbReference type="GO" id="GO:0004422">
    <property type="term" value="F:hypoxanthine phosphoribosyltransferase activity"/>
    <property type="evidence" value="ECO:0007669"/>
    <property type="project" value="InterPro"/>
</dbReference>
<dbReference type="GO" id="GO:0046872">
    <property type="term" value="F:metal ion binding"/>
    <property type="evidence" value="ECO:0007669"/>
    <property type="project" value="UniProtKB-KW"/>
</dbReference>
<dbReference type="GO" id="GO:0000166">
    <property type="term" value="F:nucleotide binding"/>
    <property type="evidence" value="ECO:0007669"/>
    <property type="project" value="UniProtKB-KW"/>
</dbReference>
<dbReference type="GO" id="GO:0006166">
    <property type="term" value="P:purine ribonucleoside salvage"/>
    <property type="evidence" value="ECO:0007669"/>
    <property type="project" value="InterPro"/>
</dbReference>
<dbReference type="CDD" id="cd06223">
    <property type="entry name" value="PRTases_typeI"/>
    <property type="match status" value="1"/>
</dbReference>
<dbReference type="FunFam" id="3.40.50.2020:FF:000038">
    <property type="entry name" value="Hypoxanthine phosphoribosyltransferase"/>
    <property type="match status" value="1"/>
</dbReference>
<dbReference type="Gene3D" id="3.40.50.2020">
    <property type="match status" value="1"/>
</dbReference>
<dbReference type="InterPro" id="IPR050408">
    <property type="entry name" value="HGPRT"/>
</dbReference>
<dbReference type="InterPro" id="IPR005904">
    <property type="entry name" value="Hxn_phspho_trans"/>
</dbReference>
<dbReference type="InterPro" id="IPR000836">
    <property type="entry name" value="PRibTrfase_dom"/>
</dbReference>
<dbReference type="InterPro" id="IPR029057">
    <property type="entry name" value="PRTase-like"/>
</dbReference>
<dbReference type="NCBIfam" id="TIGR01203">
    <property type="entry name" value="HGPRTase"/>
    <property type="match status" value="1"/>
</dbReference>
<dbReference type="PANTHER" id="PTHR43340">
    <property type="entry name" value="HYPOXANTHINE-GUANINE PHOSPHORIBOSYLTRANSFERASE"/>
    <property type="match status" value="1"/>
</dbReference>
<dbReference type="PANTHER" id="PTHR43340:SF5">
    <property type="entry name" value="PHOSPHORIBOSYLTRANSFERASE DOMAIN-CONTAINING PROTEIN 1"/>
    <property type="match status" value="1"/>
</dbReference>
<dbReference type="Pfam" id="PF00156">
    <property type="entry name" value="Pribosyltran"/>
    <property type="match status" value="1"/>
</dbReference>
<dbReference type="SUPFAM" id="SSF53271">
    <property type="entry name" value="PRTase-like"/>
    <property type="match status" value="1"/>
</dbReference>
<sequence>MTEKSICPSRDNGVVIPDNWTGYDLDVFSLPNHYCEDLECVFIPHGVIVDRTERIANDIMRDIGDNHITVLCVLKGGYRFCTDLVEHIKNLSRNSERFISMRVDFIRLKCYCNDQCMDELQILGGEDLAKLSGKNVLIVEDIINTGRTMTALLSQLEKYKPKMVKVASLLVKRSASSNQYRPDYTGFEIPNKFVVGYALDYNEYFRDLHHICVINEKGKNKYKV</sequence>
<keyword id="KW-0460">Magnesium</keyword>
<keyword id="KW-0479">Metal-binding</keyword>
<keyword id="KW-0547">Nucleotide-binding</keyword>
<keyword id="KW-1185">Reference proteome</keyword>
<proteinExistence type="evidence at transcript level"/>